<organism>
    <name type="scientific">Homo sapiens</name>
    <name type="common">Human</name>
    <dbReference type="NCBI Taxonomy" id="9606"/>
    <lineage>
        <taxon>Eukaryota</taxon>
        <taxon>Metazoa</taxon>
        <taxon>Chordata</taxon>
        <taxon>Craniata</taxon>
        <taxon>Vertebrata</taxon>
        <taxon>Euteleostomi</taxon>
        <taxon>Mammalia</taxon>
        <taxon>Eutheria</taxon>
        <taxon>Euarchontoglires</taxon>
        <taxon>Primates</taxon>
        <taxon>Haplorrhini</taxon>
        <taxon>Catarrhini</taxon>
        <taxon>Hominidae</taxon>
        <taxon>Homo</taxon>
    </lineage>
</organism>
<gene>
    <name evidence="18 21" type="primary">ASF1B</name>
</gene>
<dbReference type="EMBL" id="AF279307">
    <property type="protein sequence ID" value="AAK82973.1"/>
    <property type="molecule type" value="mRNA"/>
</dbReference>
<dbReference type="EMBL" id="AB104486">
    <property type="protein sequence ID" value="BAC87709.1"/>
    <property type="molecule type" value="mRNA"/>
</dbReference>
<dbReference type="EMBL" id="CR457235">
    <property type="protein sequence ID" value="CAG33516.1"/>
    <property type="molecule type" value="mRNA"/>
</dbReference>
<dbReference type="EMBL" id="AK001288">
    <property type="protein sequence ID" value="BAA91602.1"/>
    <property type="molecule type" value="mRNA"/>
</dbReference>
<dbReference type="EMBL" id="AK001466">
    <property type="protein sequence ID" value="BAA91708.1"/>
    <property type="molecule type" value="mRNA"/>
</dbReference>
<dbReference type="EMBL" id="AK223080">
    <property type="protein sequence ID" value="BAD96800.1"/>
    <property type="molecule type" value="mRNA"/>
</dbReference>
<dbReference type="EMBL" id="AC022098">
    <property type="status" value="NOT_ANNOTATED_CDS"/>
    <property type="molecule type" value="Genomic_DNA"/>
</dbReference>
<dbReference type="EMBL" id="BC007726">
    <property type="protein sequence ID" value="AAH07726.1"/>
    <property type="molecule type" value="mRNA"/>
</dbReference>
<dbReference type="EMBL" id="BC010014">
    <property type="protein sequence ID" value="AAH10014.1"/>
    <property type="molecule type" value="mRNA"/>
</dbReference>
<dbReference type="EMBL" id="BC036521">
    <property type="protein sequence ID" value="AAH36521.1"/>
    <property type="molecule type" value="mRNA"/>
</dbReference>
<dbReference type="CCDS" id="CCDS12306.1"/>
<dbReference type="RefSeq" id="NP_060624.1">
    <property type="nucleotide sequence ID" value="NM_018154.3"/>
</dbReference>
<dbReference type="PDB" id="5BNX">
    <property type="method" value="X-ray"/>
    <property type="resolution" value="2.31 A"/>
    <property type="chains" value="D=1-158"/>
</dbReference>
<dbReference type="PDB" id="5BO0">
    <property type="method" value="X-ray"/>
    <property type="resolution" value="2.91 A"/>
    <property type="chains" value="D=1-158"/>
</dbReference>
<dbReference type="PDB" id="7V1M">
    <property type="method" value="X-ray"/>
    <property type="resolution" value="2.83 A"/>
    <property type="chains" value="D/F=1-158"/>
</dbReference>
<dbReference type="PDB" id="7VCQ">
    <property type="method" value="X-ray"/>
    <property type="resolution" value="3.00 A"/>
    <property type="chains" value="D/F/I=1-156"/>
</dbReference>
<dbReference type="PDBsum" id="5BNX"/>
<dbReference type="PDBsum" id="5BO0"/>
<dbReference type="PDBsum" id="7V1M"/>
<dbReference type="PDBsum" id="7VCQ"/>
<dbReference type="SMR" id="Q9NVP2"/>
<dbReference type="BioGRID" id="120845">
    <property type="interactions" value="120"/>
</dbReference>
<dbReference type="CORUM" id="Q9NVP2"/>
<dbReference type="DIP" id="DIP-29242N"/>
<dbReference type="FunCoup" id="Q9NVP2">
    <property type="interactions" value="2032"/>
</dbReference>
<dbReference type="IntAct" id="Q9NVP2">
    <property type="interactions" value="44"/>
</dbReference>
<dbReference type="MINT" id="Q9NVP2"/>
<dbReference type="STRING" id="9606.ENSP00000263382"/>
<dbReference type="GlyGen" id="Q9NVP2">
    <property type="glycosylation" value="1 site, 1 O-linked glycan (1 site)"/>
</dbReference>
<dbReference type="iPTMnet" id="Q9NVP2"/>
<dbReference type="MetOSite" id="Q9NVP2"/>
<dbReference type="PhosphoSitePlus" id="Q9NVP2"/>
<dbReference type="SwissPalm" id="Q9NVP2"/>
<dbReference type="BioMuta" id="ASF1B"/>
<dbReference type="CPTAC" id="CPTAC-953"/>
<dbReference type="jPOST" id="Q9NVP2"/>
<dbReference type="MassIVE" id="Q9NVP2"/>
<dbReference type="PaxDb" id="9606-ENSP00000263382"/>
<dbReference type="PeptideAtlas" id="Q9NVP2"/>
<dbReference type="ProteomicsDB" id="82838"/>
<dbReference type="Pumba" id="Q9NVP2"/>
<dbReference type="ABCD" id="Q9NVP2">
    <property type="antibodies" value="1 sequenced antibody"/>
</dbReference>
<dbReference type="Antibodypedia" id="26631">
    <property type="antibodies" value="328 antibodies from 30 providers"/>
</dbReference>
<dbReference type="DNASU" id="55723"/>
<dbReference type="Ensembl" id="ENST00000263382.8">
    <property type="protein sequence ID" value="ENSP00000263382.3"/>
    <property type="gene ID" value="ENSG00000105011.9"/>
</dbReference>
<dbReference type="Ensembl" id="ENST00000672225.1">
    <property type="protein sequence ID" value="ENSP00000499863.1"/>
    <property type="gene ID" value="ENSG00000288210.1"/>
</dbReference>
<dbReference type="GeneID" id="55723"/>
<dbReference type="KEGG" id="hsa:55723"/>
<dbReference type="MANE-Select" id="ENST00000263382.8">
    <property type="protein sequence ID" value="ENSP00000263382.3"/>
    <property type="RefSeq nucleotide sequence ID" value="NM_018154.3"/>
    <property type="RefSeq protein sequence ID" value="NP_060624.1"/>
</dbReference>
<dbReference type="UCSC" id="uc002mye.4">
    <property type="organism name" value="human"/>
</dbReference>
<dbReference type="AGR" id="HGNC:20996"/>
<dbReference type="CTD" id="55723"/>
<dbReference type="DisGeNET" id="55723"/>
<dbReference type="GeneCards" id="ASF1B"/>
<dbReference type="HGNC" id="HGNC:20996">
    <property type="gene designation" value="ASF1B"/>
</dbReference>
<dbReference type="HPA" id="ENSG00000105011">
    <property type="expression patterns" value="Tissue enhanced (lymphoid tissue, testis)"/>
</dbReference>
<dbReference type="MIM" id="609190">
    <property type="type" value="gene"/>
</dbReference>
<dbReference type="neXtProt" id="NX_Q9NVP2"/>
<dbReference type="OpenTargets" id="ENSG00000105011"/>
<dbReference type="PharmGKB" id="PA134931112"/>
<dbReference type="VEuPathDB" id="HostDB:ENSG00000105011"/>
<dbReference type="eggNOG" id="KOG3265">
    <property type="taxonomic scope" value="Eukaryota"/>
</dbReference>
<dbReference type="GeneTree" id="ENSGT00390000004692"/>
<dbReference type="HOGENOM" id="CLU_060354_1_2_1"/>
<dbReference type="InParanoid" id="Q9NVP2"/>
<dbReference type="OMA" id="HINWDSN"/>
<dbReference type="OrthoDB" id="29755at2759"/>
<dbReference type="PAN-GO" id="Q9NVP2">
    <property type="GO annotations" value="3 GO annotations based on evolutionary models"/>
</dbReference>
<dbReference type="PhylomeDB" id="Q9NVP2"/>
<dbReference type="TreeFam" id="TF106429"/>
<dbReference type="PathwayCommons" id="Q9NVP2"/>
<dbReference type="SignaLink" id="Q9NVP2"/>
<dbReference type="SIGNOR" id="Q9NVP2"/>
<dbReference type="BioGRID-ORCS" id="55723">
    <property type="hits" value="197 hits in 1166 CRISPR screens"/>
</dbReference>
<dbReference type="ChiTaRS" id="ASF1B">
    <property type="organism name" value="human"/>
</dbReference>
<dbReference type="EvolutionaryTrace" id="Q9NVP2"/>
<dbReference type="GeneWiki" id="ASF1B"/>
<dbReference type="GenomeRNAi" id="55723"/>
<dbReference type="Pharos" id="Q9NVP2">
    <property type="development level" value="Tbio"/>
</dbReference>
<dbReference type="PRO" id="PR:Q9NVP2"/>
<dbReference type="Proteomes" id="UP000005640">
    <property type="component" value="Chromosome 19"/>
</dbReference>
<dbReference type="RNAct" id="Q9NVP2">
    <property type="molecule type" value="protein"/>
</dbReference>
<dbReference type="Bgee" id="ENSG00000105011">
    <property type="expression patterns" value="Expressed in right testis and 97 other cell types or tissues"/>
</dbReference>
<dbReference type="ExpressionAtlas" id="Q9NVP2">
    <property type="expression patterns" value="baseline and differential"/>
</dbReference>
<dbReference type="GO" id="GO:0000785">
    <property type="term" value="C:chromatin"/>
    <property type="evidence" value="ECO:0000314"/>
    <property type="project" value="UniProtKB"/>
</dbReference>
<dbReference type="GO" id="GO:0005829">
    <property type="term" value="C:cytosol"/>
    <property type="evidence" value="ECO:0007669"/>
    <property type="project" value="UniProtKB-SubCell"/>
</dbReference>
<dbReference type="GO" id="GO:0005654">
    <property type="term" value="C:nucleoplasm"/>
    <property type="evidence" value="ECO:0000314"/>
    <property type="project" value="HPA"/>
</dbReference>
<dbReference type="GO" id="GO:0005634">
    <property type="term" value="C:nucleus"/>
    <property type="evidence" value="ECO:0000318"/>
    <property type="project" value="GO_Central"/>
</dbReference>
<dbReference type="GO" id="GO:0032991">
    <property type="term" value="C:protein-containing complex"/>
    <property type="evidence" value="ECO:0000314"/>
    <property type="project" value="UniProtKB"/>
</dbReference>
<dbReference type="GO" id="GO:0042393">
    <property type="term" value="F:histone binding"/>
    <property type="evidence" value="ECO:0000318"/>
    <property type="project" value="GO_Central"/>
</dbReference>
<dbReference type="GO" id="GO:0140713">
    <property type="term" value="F:histone chaperone activity"/>
    <property type="evidence" value="ECO:0000314"/>
    <property type="project" value="UniProtKB"/>
</dbReference>
<dbReference type="GO" id="GO:0001835">
    <property type="term" value="P:blastocyst hatching"/>
    <property type="evidence" value="ECO:0007669"/>
    <property type="project" value="Ensembl"/>
</dbReference>
<dbReference type="GO" id="GO:0030154">
    <property type="term" value="P:cell differentiation"/>
    <property type="evidence" value="ECO:0007669"/>
    <property type="project" value="UniProtKB-KW"/>
</dbReference>
<dbReference type="GO" id="GO:0006335">
    <property type="term" value="P:DNA replication-dependent chromatin assembly"/>
    <property type="evidence" value="ECO:0000318"/>
    <property type="project" value="GO_Central"/>
</dbReference>
<dbReference type="GO" id="GO:0006334">
    <property type="term" value="P:nucleosome assembly"/>
    <property type="evidence" value="ECO:0000314"/>
    <property type="project" value="GO_Central"/>
</dbReference>
<dbReference type="GO" id="GO:0007283">
    <property type="term" value="P:spermatogenesis"/>
    <property type="evidence" value="ECO:0007669"/>
    <property type="project" value="UniProtKB-KW"/>
</dbReference>
<dbReference type="FunFam" id="2.60.40.1490:FF:000001">
    <property type="entry name" value="Histone chaperone ASF1"/>
    <property type="match status" value="1"/>
</dbReference>
<dbReference type="Gene3D" id="2.60.40.1490">
    <property type="entry name" value="Histone chaperone ASF1-like"/>
    <property type="match status" value="1"/>
</dbReference>
<dbReference type="InterPro" id="IPR006818">
    <property type="entry name" value="ASF1-like"/>
</dbReference>
<dbReference type="InterPro" id="IPR036747">
    <property type="entry name" value="ASF1-like_sf"/>
</dbReference>
<dbReference type="PANTHER" id="PTHR12040">
    <property type="entry name" value="ANTI-SILENCING PROTEIN 1"/>
    <property type="match status" value="1"/>
</dbReference>
<dbReference type="PANTHER" id="PTHR12040:SF22">
    <property type="entry name" value="HISTONE CHAPERONE ASF1B"/>
    <property type="match status" value="1"/>
</dbReference>
<dbReference type="Pfam" id="PF04729">
    <property type="entry name" value="ASF1_hist_chap"/>
    <property type="match status" value="1"/>
</dbReference>
<dbReference type="SUPFAM" id="SSF101546">
    <property type="entry name" value="ASF1-like"/>
    <property type="match status" value="1"/>
</dbReference>
<keyword id="KW-0002">3D-structure</keyword>
<keyword id="KW-0143">Chaperone</keyword>
<keyword id="KW-0156">Chromatin regulator</keyword>
<keyword id="KW-0963">Cytoplasm</keyword>
<keyword id="KW-0217">Developmental protein</keyword>
<keyword id="KW-0221">Differentiation</keyword>
<keyword id="KW-0539">Nucleus</keyword>
<keyword id="KW-0597">Phosphoprotein</keyword>
<keyword id="KW-1267">Proteomics identification</keyword>
<keyword id="KW-1185">Reference proteome</keyword>
<keyword id="KW-0744">Spermatogenesis</keyword>
<keyword id="KW-0804">Transcription</keyword>
<keyword id="KW-0805">Transcription regulation</keyword>
<reference key="1">
    <citation type="journal article" date="2001" name="Curr. Biol.">
        <title>Identification of human Asf1 chromatin assembly factors as substrates of Tousled-like kinases.</title>
        <authorList>
            <person name="Sillje H.H.W."/>
            <person name="Nigg E.A."/>
        </authorList>
    </citation>
    <scope>NUCLEOTIDE SEQUENCE [MRNA]</scope>
    <scope>PHOSPHORYLATION BY TLK1 AND TLK2</scope>
</reference>
<reference key="2">
    <citation type="journal article" date="2003" name="J. Biol. Chem.">
        <title>Transcription initiation factor IID-interactive histone chaperone CIA-II implicated in mammalian spermatogenesis.</title>
        <authorList>
            <person name="Umehara T."/>
            <person name="Horikoshi M."/>
        </authorList>
    </citation>
    <scope>NUCLEOTIDE SEQUENCE [MRNA]</scope>
    <scope>FUNCTION</scope>
    <scope>INTERACTION WITH HISTONE H3.3; HISTONE H4 AND TAF1</scope>
    <scope>SUBCELLULAR LOCATION</scope>
    <scope>TISSUE SPECIFICITY</scope>
</reference>
<reference key="3">
    <citation type="submission" date="2004-06" db="EMBL/GenBank/DDBJ databases">
        <title>Cloning of human full open reading frames in Gateway(TM) system entry vector (pDONR201).</title>
        <authorList>
            <person name="Ebert L."/>
            <person name="Schick M."/>
            <person name="Neubert P."/>
            <person name="Schatten R."/>
            <person name="Henze S."/>
            <person name="Korn B."/>
        </authorList>
    </citation>
    <scope>NUCLEOTIDE SEQUENCE [LARGE SCALE MRNA]</scope>
</reference>
<reference key="4">
    <citation type="journal article" date="2004" name="Nat. Genet.">
        <title>Complete sequencing and characterization of 21,243 full-length human cDNAs.</title>
        <authorList>
            <person name="Ota T."/>
            <person name="Suzuki Y."/>
            <person name="Nishikawa T."/>
            <person name="Otsuki T."/>
            <person name="Sugiyama T."/>
            <person name="Irie R."/>
            <person name="Wakamatsu A."/>
            <person name="Hayashi K."/>
            <person name="Sato H."/>
            <person name="Nagai K."/>
            <person name="Kimura K."/>
            <person name="Makita H."/>
            <person name="Sekine M."/>
            <person name="Obayashi M."/>
            <person name="Nishi T."/>
            <person name="Shibahara T."/>
            <person name="Tanaka T."/>
            <person name="Ishii S."/>
            <person name="Yamamoto J."/>
            <person name="Saito K."/>
            <person name="Kawai Y."/>
            <person name="Isono Y."/>
            <person name="Nakamura Y."/>
            <person name="Nagahari K."/>
            <person name="Murakami K."/>
            <person name="Yasuda T."/>
            <person name="Iwayanagi T."/>
            <person name="Wagatsuma M."/>
            <person name="Shiratori A."/>
            <person name="Sudo H."/>
            <person name="Hosoiri T."/>
            <person name="Kaku Y."/>
            <person name="Kodaira H."/>
            <person name="Kondo H."/>
            <person name="Sugawara M."/>
            <person name="Takahashi M."/>
            <person name="Kanda K."/>
            <person name="Yokoi T."/>
            <person name="Furuya T."/>
            <person name="Kikkawa E."/>
            <person name="Omura Y."/>
            <person name="Abe K."/>
            <person name="Kamihara K."/>
            <person name="Katsuta N."/>
            <person name="Sato K."/>
            <person name="Tanikawa M."/>
            <person name="Yamazaki M."/>
            <person name="Ninomiya K."/>
            <person name="Ishibashi T."/>
            <person name="Yamashita H."/>
            <person name="Murakawa K."/>
            <person name="Fujimori K."/>
            <person name="Tanai H."/>
            <person name="Kimata M."/>
            <person name="Watanabe M."/>
            <person name="Hiraoka S."/>
            <person name="Chiba Y."/>
            <person name="Ishida S."/>
            <person name="Ono Y."/>
            <person name="Takiguchi S."/>
            <person name="Watanabe S."/>
            <person name="Yosida M."/>
            <person name="Hotuta T."/>
            <person name="Kusano J."/>
            <person name="Kanehori K."/>
            <person name="Takahashi-Fujii A."/>
            <person name="Hara H."/>
            <person name="Tanase T.-O."/>
            <person name="Nomura Y."/>
            <person name="Togiya S."/>
            <person name="Komai F."/>
            <person name="Hara R."/>
            <person name="Takeuchi K."/>
            <person name="Arita M."/>
            <person name="Imose N."/>
            <person name="Musashino K."/>
            <person name="Yuuki H."/>
            <person name="Oshima A."/>
            <person name="Sasaki N."/>
            <person name="Aotsuka S."/>
            <person name="Yoshikawa Y."/>
            <person name="Matsunawa H."/>
            <person name="Ichihara T."/>
            <person name="Shiohata N."/>
            <person name="Sano S."/>
            <person name="Moriya S."/>
            <person name="Momiyama H."/>
            <person name="Satoh N."/>
            <person name="Takami S."/>
            <person name="Terashima Y."/>
            <person name="Suzuki O."/>
            <person name="Nakagawa S."/>
            <person name="Senoh A."/>
            <person name="Mizoguchi H."/>
            <person name="Goto Y."/>
            <person name="Shimizu F."/>
            <person name="Wakebe H."/>
            <person name="Hishigaki H."/>
            <person name="Watanabe T."/>
            <person name="Sugiyama A."/>
            <person name="Takemoto M."/>
            <person name="Kawakami B."/>
            <person name="Yamazaki M."/>
            <person name="Watanabe K."/>
            <person name="Kumagai A."/>
            <person name="Itakura S."/>
            <person name="Fukuzumi Y."/>
            <person name="Fujimori Y."/>
            <person name="Komiyama M."/>
            <person name="Tashiro H."/>
            <person name="Tanigami A."/>
            <person name="Fujiwara T."/>
            <person name="Ono T."/>
            <person name="Yamada K."/>
            <person name="Fujii Y."/>
            <person name="Ozaki K."/>
            <person name="Hirao M."/>
            <person name="Ohmori Y."/>
            <person name="Kawabata A."/>
            <person name="Hikiji T."/>
            <person name="Kobatake N."/>
            <person name="Inagaki H."/>
            <person name="Ikema Y."/>
            <person name="Okamoto S."/>
            <person name="Okitani R."/>
            <person name="Kawakami T."/>
            <person name="Noguchi S."/>
            <person name="Itoh T."/>
            <person name="Shigeta K."/>
            <person name="Senba T."/>
            <person name="Matsumura K."/>
            <person name="Nakajima Y."/>
            <person name="Mizuno T."/>
            <person name="Morinaga M."/>
            <person name="Sasaki M."/>
            <person name="Togashi T."/>
            <person name="Oyama M."/>
            <person name="Hata H."/>
            <person name="Watanabe M."/>
            <person name="Komatsu T."/>
            <person name="Mizushima-Sugano J."/>
            <person name="Satoh T."/>
            <person name="Shirai Y."/>
            <person name="Takahashi Y."/>
            <person name="Nakagawa K."/>
            <person name="Okumura K."/>
            <person name="Nagase T."/>
            <person name="Nomura N."/>
            <person name="Kikuchi H."/>
            <person name="Masuho Y."/>
            <person name="Yamashita R."/>
            <person name="Nakai K."/>
            <person name="Yada T."/>
            <person name="Nakamura Y."/>
            <person name="Ohara O."/>
            <person name="Isogai T."/>
            <person name="Sugano S."/>
        </authorList>
    </citation>
    <scope>NUCLEOTIDE SEQUENCE [LARGE SCALE MRNA]</scope>
    <source>
        <tissue>Teratocarcinoma</tissue>
    </source>
</reference>
<reference key="5">
    <citation type="submission" date="2005-04" db="EMBL/GenBank/DDBJ databases">
        <authorList>
            <person name="Suzuki Y."/>
            <person name="Sugano S."/>
            <person name="Totoki Y."/>
            <person name="Toyoda A."/>
            <person name="Takeda T."/>
            <person name="Sakaki Y."/>
            <person name="Tanaka A."/>
            <person name="Yokoyama S."/>
        </authorList>
    </citation>
    <scope>NUCLEOTIDE SEQUENCE [LARGE SCALE MRNA]</scope>
</reference>
<reference key="6">
    <citation type="journal article" date="2004" name="Nature">
        <title>The DNA sequence and biology of human chromosome 19.</title>
        <authorList>
            <person name="Grimwood J."/>
            <person name="Gordon L.A."/>
            <person name="Olsen A.S."/>
            <person name="Terry A."/>
            <person name="Schmutz J."/>
            <person name="Lamerdin J.E."/>
            <person name="Hellsten U."/>
            <person name="Goodstein D."/>
            <person name="Couronne O."/>
            <person name="Tran-Gyamfi M."/>
            <person name="Aerts A."/>
            <person name="Altherr M."/>
            <person name="Ashworth L."/>
            <person name="Bajorek E."/>
            <person name="Black S."/>
            <person name="Branscomb E."/>
            <person name="Caenepeel S."/>
            <person name="Carrano A.V."/>
            <person name="Caoile C."/>
            <person name="Chan Y.M."/>
            <person name="Christensen M."/>
            <person name="Cleland C.A."/>
            <person name="Copeland A."/>
            <person name="Dalin E."/>
            <person name="Dehal P."/>
            <person name="Denys M."/>
            <person name="Detter J.C."/>
            <person name="Escobar J."/>
            <person name="Flowers D."/>
            <person name="Fotopulos D."/>
            <person name="Garcia C."/>
            <person name="Georgescu A.M."/>
            <person name="Glavina T."/>
            <person name="Gomez M."/>
            <person name="Gonzales E."/>
            <person name="Groza M."/>
            <person name="Hammon N."/>
            <person name="Hawkins T."/>
            <person name="Haydu L."/>
            <person name="Ho I."/>
            <person name="Huang W."/>
            <person name="Israni S."/>
            <person name="Jett J."/>
            <person name="Kadner K."/>
            <person name="Kimball H."/>
            <person name="Kobayashi A."/>
            <person name="Larionov V."/>
            <person name="Leem S.-H."/>
            <person name="Lopez F."/>
            <person name="Lou Y."/>
            <person name="Lowry S."/>
            <person name="Malfatti S."/>
            <person name="Martinez D."/>
            <person name="McCready P.M."/>
            <person name="Medina C."/>
            <person name="Morgan J."/>
            <person name="Nelson K."/>
            <person name="Nolan M."/>
            <person name="Ovcharenko I."/>
            <person name="Pitluck S."/>
            <person name="Pollard M."/>
            <person name="Popkie A.P."/>
            <person name="Predki P."/>
            <person name="Quan G."/>
            <person name="Ramirez L."/>
            <person name="Rash S."/>
            <person name="Retterer J."/>
            <person name="Rodriguez A."/>
            <person name="Rogers S."/>
            <person name="Salamov A."/>
            <person name="Salazar A."/>
            <person name="She X."/>
            <person name="Smith D."/>
            <person name="Slezak T."/>
            <person name="Solovyev V."/>
            <person name="Thayer N."/>
            <person name="Tice H."/>
            <person name="Tsai M."/>
            <person name="Ustaszewska A."/>
            <person name="Vo N."/>
            <person name="Wagner M."/>
            <person name="Wheeler J."/>
            <person name="Wu K."/>
            <person name="Xie G."/>
            <person name="Yang J."/>
            <person name="Dubchak I."/>
            <person name="Furey T.S."/>
            <person name="DeJong P."/>
            <person name="Dickson M."/>
            <person name="Gordon D."/>
            <person name="Eichler E.E."/>
            <person name="Pennacchio L.A."/>
            <person name="Richardson P."/>
            <person name="Stubbs L."/>
            <person name="Rokhsar D.S."/>
            <person name="Myers R.M."/>
            <person name="Rubin E.M."/>
            <person name="Lucas S.M."/>
        </authorList>
    </citation>
    <scope>NUCLEOTIDE SEQUENCE [LARGE SCALE GENOMIC DNA]</scope>
</reference>
<reference key="7">
    <citation type="journal article" date="2004" name="Genome Res.">
        <title>The status, quality, and expansion of the NIH full-length cDNA project: the Mammalian Gene Collection (MGC).</title>
        <authorList>
            <consortium name="The MGC Project Team"/>
        </authorList>
    </citation>
    <scope>NUCLEOTIDE SEQUENCE [LARGE SCALE MRNA]</scope>
    <source>
        <tissue>Testis</tissue>
        <tissue>Uterus</tissue>
    </source>
</reference>
<reference key="8">
    <citation type="journal article" date="2002" name="EMBO Rep.">
        <title>Human Asf1 and CAF-1 interact and synergize in a repair-coupled nucleosome assembly pathway.</title>
        <authorList>
            <person name="Mello J.A."/>
            <person name="Sillje H.H.W."/>
            <person name="Roche D.M.J."/>
            <person name="Kirschner D.B."/>
            <person name="Nigg E.A."/>
            <person name="Almouzni G."/>
        </authorList>
    </citation>
    <scope>FUNCTION</scope>
    <scope>INTERACTION WITH CHAF1A; CHAF1B AND RBBP4</scope>
</reference>
<reference key="9">
    <citation type="journal article" date="2004" name="Cell">
        <title>Histone H3.1 and H3.3 complexes mediate nucleosome assembly pathways dependent or independent of DNA synthesis.</title>
        <authorList>
            <person name="Tagami H."/>
            <person name="Ray-Gallet D."/>
            <person name="Almouzni G."/>
            <person name="Nakatani Y."/>
        </authorList>
    </citation>
    <scope>FUNCTION</scope>
    <scope>IDENTIFICATION BY MASS SPECTROMETRY</scope>
    <scope>IDENTIFICATION IN COMPLEXES WITH CHAF1A; CHAF1B; HAT1; HISTONE H3.1; HISTONE H3.3; HISTONE H4; NASP AND RBBP4</scope>
</reference>
<reference key="10">
    <citation type="journal article" date="2005" name="Eukaryot. Cell">
        <title>Functional conservation and specialization among eukaryotic anti-silencing function 1 histone chaperones.</title>
        <authorList>
            <person name="Tamburini B.A."/>
            <person name="Carson J.J."/>
            <person name="Adkins M.W."/>
            <person name="Tyler J.K."/>
        </authorList>
    </citation>
    <scope>FUNCTION</scope>
</reference>
<reference key="11">
    <citation type="journal article" date="2005" name="Mol. Cell">
        <title>Human Asf1 regulates the flow of S phase histones during replicational stress.</title>
        <authorList>
            <person name="Groth A."/>
            <person name="Ray-Gallet D."/>
            <person name="Quivy J.-P."/>
            <person name="Lukas J."/>
            <person name="Bartek J."/>
            <person name="Almouzni G."/>
        </authorList>
    </citation>
    <scope>FUNCTION</scope>
    <scope>INTERACTION WITH HISTONE H3.1; HISTONE H3.3 AND HISTONE H4</scope>
</reference>
<reference key="12">
    <citation type="journal article" date="2006" name="J. Biol. Chem.">
        <title>Asf1 is required for viability and chromatin assembly during DNA replication in vertebrate cells.</title>
        <authorList>
            <person name="Sanematsu F."/>
            <person name="Takami Y."/>
            <person name="Barman H.K."/>
            <person name="Fukagawa T."/>
            <person name="Ono T."/>
            <person name="Shibahara K."/>
            <person name="Nakayama T."/>
        </authorList>
    </citation>
    <scope>INTERACTION WITH CHAF1B; HISTONE H3 AND HISTONE H4</scope>
</reference>
<reference key="13">
    <citation type="journal article" date="2006" name="Nat. Struct. Mol. Biol.">
        <title>Structure of a human ASF1a-HIRA complex and insights into specificity of histone chaperone complex assembly.</title>
        <authorList>
            <person name="Tang Y."/>
            <person name="Poustovoitov M.V."/>
            <person name="Zhao K."/>
            <person name="Garfinkel M."/>
            <person name="Canutescu A."/>
            <person name="Dunbrack R."/>
            <person name="Adams P.D."/>
            <person name="Marmorstein R."/>
        </authorList>
    </citation>
    <scope>INTERACTION WITH CHAF1B</scope>
</reference>
<reference key="14">
    <citation type="journal article" date="2009" name="PLoS ONE">
        <title>Phosphorylation-mediated control of histone chaperone ASF1 levels by Tousled-like kinases.</title>
        <authorList>
            <person name="Pilyugin M."/>
            <person name="Demmers J."/>
            <person name="Verrijzer C.P."/>
            <person name="Karch F."/>
            <person name="Moshkin Y.M."/>
        </authorList>
    </citation>
    <scope>PHOSPHORYLATION AT SER-198 BY TLK2</scope>
</reference>
<reference key="15">
    <citation type="journal article" date="2010" name="Nat. Struct. Mol. Biol.">
        <title>The program for processing newly synthesized histones H3.1 and H4.</title>
        <authorList>
            <person name="Campos E.I."/>
            <person name="Fillingham J."/>
            <person name="Li G."/>
            <person name="Zheng H."/>
            <person name="Voigt P."/>
            <person name="Kuo W.H."/>
            <person name="Seepany H."/>
            <person name="Gao Z."/>
            <person name="Day L.A."/>
            <person name="Greenblatt J.F."/>
            <person name="Reinberg D."/>
        </authorList>
    </citation>
    <scope>FUNCTION</scope>
    <scope>SUBCELLULAR LOCATION</scope>
    <scope>IDENTIFICATION IN A COMPLEX WITH IPO4; HISTONES H3 AND H4</scope>
</reference>
<reference key="16">
    <citation type="journal article" date="2010" name="Sci. Signal.">
        <title>Quantitative phosphoproteomics reveals widespread full phosphorylation site occupancy during mitosis.</title>
        <authorList>
            <person name="Olsen J.V."/>
            <person name="Vermeulen M."/>
            <person name="Santamaria A."/>
            <person name="Kumar C."/>
            <person name="Miller M.L."/>
            <person name="Jensen L.J."/>
            <person name="Gnad F."/>
            <person name="Cox J."/>
            <person name="Jensen T.S."/>
            <person name="Nigg E.A."/>
            <person name="Brunak S."/>
            <person name="Mann M."/>
        </authorList>
    </citation>
    <scope>IDENTIFICATION BY MASS SPECTROMETRY [LARGE SCALE ANALYSIS]</scope>
    <source>
        <tissue>Cervix carcinoma</tissue>
    </source>
</reference>
<reference key="17">
    <citation type="journal article" date="2011" name="BMC Syst. Biol.">
        <title>Initial characterization of the human central proteome.</title>
        <authorList>
            <person name="Burkard T.R."/>
            <person name="Planyavsky M."/>
            <person name="Kaupe I."/>
            <person name="Breitwieser F.P."/>
            <person name="Buerckstuemmer T."/>
            <person name="Bennett K.L."/>
            <person name="Superti-Furga G."/>
            <person name="Colinge J."/>
        </authorList>
    </citation>
    <scope>IDENTIFICATION BY MASS SPECTROMETRY [LARGE SCALE ANALYSIS]</scope>
</reference>
<reference key="18">
    <citation type="journal article" date="2011" name="J. Biol. Chem.">
        <title>Sequential establishment of marks on soluble histones H3 and H4.</title>
        <authorList>
            <person name="Alvarez F."/>
            <person name="Munoz F."/>
            <person name="Schilcher P."/>
            <person name="Imhof A."/>
            <person name="Almouzni G."/>
            <person name="Loyola A."/>
        </authorList>
    </citation>
    <scope>FUNCTION</scope>
    <scope>IDENTIFICATION IN A COMPLEX WITH IPO4; HISTONES H3 AND H4</scope>
</reference>
<reference key="19">
    <citation type="journal article" date="2011" name="Mol. Cell">
        <title>A specific function for the histone chaperone NASP to fine-tune a reservoir of soluble H3-H4 in the histone supply chain.</title>
        <authorList>
            <person name="Cook A.J."/>
            <person name="Gurard-Levin Z.A."/>
            <person name="Vassias I."/>
            <person name="Almouzni G."/>
        </authorList>
    </citation>
    <scope>INTERACTION WITH NASP AND HISTONES H3 AND H4</scope>
</reference>
<reference key="20">
    <citation type="journal article" date="2012" name="EMBO J.">
        <title>Codanin-1, mutated in the anaemic disease CDAI, regulates Asf1 function in S-phase histone supply.</title>
        <authorList>
            <person name="Ask K."/>
            <person name="Jasencakova Z."/>
            <person name="Menard P."/>
            <person name="Feng Y."/>
            <person name="Almouzni G."/>
            <person name="Groth A."/>
        </authorList>
    </citation>
    <scope>INTERACTION WITH CDAN1</scope>
    <scope>SUBCELLULAR LOCATION</scope>
    <scope>IDENTIFICATION IN A COMPLEX WITH CDNA1; ASF1A; IPO4; HISTONES H3.2 AND H4</scope>
    <scope>MUTAGENESIS OF ASP-36 AND ASP-37</scope>
</reference>
<reference key="21">
    <citation type="journal article" date="2014" name="Proc. Natl. Acad. Sci. U.S.A.">
        <title>Binding of the histone chaperone ASF1 to the CBP bromodomain promotes histone acetylation.</title>
        <authorList>
            <person name="Das C."/>
            <person name="Roy S."/>
            <person name="Namjoshi S."/>
            <person name="Malarkey C.S."/>
            <person name="Jones D.N."/>
            <person name="Kutateladze T.G."/>
            <person name="Churchill M.E."/>
            <person name="Tyler J.K."/>
        </authorList>
    </citation>
    <scope>INTERACTION WITH CREBBP</scope>
</reference>
<reference key="22">
    <citation type="journal article" date="2015" name="Mol. Cell">
        <title>Analysis of the histone H3.1 interactome: a suitable chaperone for the right event.</title>
        <authorList>
            <person name="Campos E.I."/>
            <person name="Smits A.H."/>
            <person name="Kang Y.H."/>
            <person name="Landry S."/>
            <person name="Escobar T.M."/>
            <person name="Nayak S."/>
            <person name="Ueberheide B.M."/>
            <person name="Durocher D."/>
            <person name="Vermeulen M."/>
            <person name="Hurwitz J."/>
            <person name="Reinberg D."/>
        </authorList>
    </citation>
    <scope>FUNCTION</scope>
</reference>
<reference key="23">
    <citation type="journal article" date="2022" name="Nat. Commun.">
        <title>Tousled-like kinase 2 targets ASF1 histone chaperones through client mimicry.</title>
        <authorList>
            <person name="Simon B."/>
            <person name="Lou H.J."/>
            <person name="Huet-Calderwood C."/>
            <person name="Shi G."/>
            <person name="Boggon T.J."/>
            <person name="Turk B.E."/>
            <person name="Calderwood D.A."/>
        </authorList>
    </citation>
    <scope>MUTAGENESIS OF SER-169 AND SER-198</scope>
    <scope>PHOSPHORYLATION AT SER-198</scope>
</reference>
<accession>Q9NVP2</accession>
<accession>Q53G51</accession>
<accession>Q9NVZ0</accession>
<proteinExistence type="evidence at protein level"/>
<feature type="chain" id="PRO_0000284015" description="Histone chaperone ASF1B">
    <location>
        <begin position="1"/>
        <end position="202"/>
    </location>
</feature>
<feature type="region of interest" description="Interaction with histone H3" evidence="1">
    <location>
        <begin position="1"/>
        <end position="156"/>
    </location>
</feature>
<feature type="region of interest" description="Interaction with CHAF1B">
    <location>
        <begin position="1"/>
        <end position="155"/>
    </location>
</feature>
<feature type="modified residue" description="Phosphoserine; by TLK2" evidence="10 17">
    <location>
        <position position="198"/>
    </location>
</feature>
<feature type="mutagenesis site" description="Abolishes CDAN1 interaction." evidence="14">
    <original>D</original>
    <variation>A</variation>
    <location>
        <position position="36"/>
    </location>
</feature>
<feature type="mutagenesis site" description="Abolishes CDAN1 interaction." evidence="14">
    <original>D</original>
    <variation>A</variation>
    <location>
        <position position="37"/>
    </location>
</feature>
<feature type="mutagenesis site" description="No apparent effect on ASF1B phosphorylation by TLK2. Reduced phosphorylation of ASF1B by TLK2 when associated with A-198." evidence="17">
    <original>S</original>
    <variation>A</variation>
    <location>
        <position position="169"/>
    </location>
</feature>
<feature type="mutagenesis site" description="Reduced phosphorylation of ASF1B by TLK2 when associated with A-169." evidence="17">
    <original>S</original>
    <variation>A</variation>
    <location>
        <position position="198"/>
    </location>
</feature>
<feature type="sequence conflict" description="In Ref. 4; BAA91602." evidence="20" ref="4">
    <original>V</original>
    <variation>A</variation>
    <location>
        <position position="11"/>
    </location>
</feature>
<feature type="sequence conflict" description="In Ref. 5; BAD96800." evidence="20" ref="5">
    <original>R</original>
    <variation>Q</variation>
    <location>
        <position position="23"/>
    </location>
</feature>
<feature type="strand" evidence="22">
    <location>
        <begin position="3"/>
        <end position="11"/>
    </location>
</feature>
<feature type="strand" evidence="22">
    <location>
        <begin position="15"/>
        <end position="17"/>
    </location>
</feature>
<feature type="strand" evidence="22">
    <location>
        <begin position="22"/>
        <end position="32"/>
    </location>
</feature>
<feature type="strand" evidence="22">
    <location>
        <begin position="34"/>
        <end position="36"/>
    </location>
</feature>
<feature type="strand" evidence="22">
    <location>
        <begin position="38"/>
        <end position="45"/>
    </location>
</feature>
<feature type="helix" evidence="22">
    <location>
        <begin position="51"/>
        <end position="53"/>
    </location>
</feature>
<feature type="strand" evidence="22">
    <location>
        <begin position="54"/>
        <end position="62"/>
    </location>
</feature>
<feature type="strand" evidence="22">
    <location>
        <begin position="67"/>
        <end position="76"/>
    </location>
</feature>
<feature type="helix" evidence="22">
    <location>
        <begin position="81"/>
        <end position="83"/>
    </location>
</feature>
<feature type="helix" evidence="22">
    <location>
        <begin position="86"/>
        <end position="89"/>
    </location>
</feature>
<feature type="strand" evidence="22">
    <location>
        <begin position="90"/>
        <end position="101"/>
    </location>
</feature>
<feature type="strand" evidence="22">
    <location>
        <begin position="104"/>
        <end position="117"/>
    </location>
</feature>
<feature type="helix" evidence="22">
    <location>
        <begin position="120"/>
        <end position="124"/>
    </location>
</feature>
<feature type="helix" evidence="22">
    <location>
        <begin position="132"/>
        <end position="134"/>
    </location>
</feature>
<feature type="strand" evidence="22">
    <location>
        <begin position="135"/>
        <end position="139"/>
    </location>
</feature>
<feature type="strand" evidence="22">
    <location>
        <begin position="145"/>
        <end position="148"/>
    </location>
</feature>
<name>ASF1B_HUMAN</name>
<evidence type="ECO:0000250" key="1">
    <source>
        <dbReference type="UniProtKB" id="Q9Y294"/>
    </source>
</evidence>
<evidence type="ECO:0000269" key="2">
    <source>
    </source>
</evidence>
<evidence type="ECO:0000269" key="3">
    <source>
    </source>
</evidence>
<evidence type="ECO:0000269" key="4">
    <source>
    </source>
</evidence>
<evidence type="ECO:0000269" key="5">
    <source>
    </source>
</evidence>
<evidence type="ECO:0000269" key="6">
    <source>
    </source>
</evidence>
<evidence type="ECO:0000269" key="7">
    <source>
    </source>
</evidence>
<evidence type="ECO:0000269" key="8">
    <source>
    </source>
</evidence>
<evidence type="ECO:0000269" key="9">
    <source>
    </source>
</evidence>
<evidence type="ECO:0000269" key="10">
    <source>
    </source>
</evidence>
<evidence type="ECO:0000269" key="11">
    <source>
    </source>
</evidence>
<evidence type="ECO:0000269" key="12">
    <source>
    </source>
</evidence>
<evidence type="ECO:0000269" key="13">
    <source>
    </source>
</evidence>
<evidence type="ECO:0000269" key="14">
    <source>
    </source>
</evidence>
<evidence type="ECO:0000269" key="15">
    <source>
    </source>
</evidence>
<evidence type="ECO:0000269" key="16">
    <source>
    </source>
</evidence>
<evidence type="ECO:0000269" key="17">
    <source>
    </source>
</evidence>
<evidence type="ECO:0000303" key="18">
    <source>
    </source>
</evidence>
<evidence type="ECO:0000303" key="19">
    <source>
    </source>
</evidence>
<evidence type="ECO:0000305" key="20"/>
<evidence type="ECO:0000312" key="21">
    <source>
        <dbReference type="HGNC" id="HGNC:20996"/>
    </source>
</evidence>
<evidence type="ECO:0007829" key="22">
    <source>
        <dbReference type="PDB" id="5BNX"/>
    </source>
</evidence>
<sequence>MAKVSVLNVAVLENPSPFHSPFRFEISFECSEALADDLEWKIIYVGSAESEEFDQILDSVLVGPVPAGRHMFVFQADAPNPSLIPETDAVGVTVVLITCTYHGQEFIRVGYYVNNEYLNPELRENPPMKPDFSQLQRNILASNPRVTRFHINWDNNMDRLEAIETQDPSLGCGLPLNCTPIKGLGLPGCIPGLLPENSMDCI</sequence>
<comment type="function">
    <text evidence="3 4 5 6 7 11 12 16">Histone chaperone that facilitates histone deposition and histone exchange and removal during nucleosome assembly and disassembly (PubMed:11897662, PubMed:14718166, PubMed:15664198, PubMed:16151251, PubMed:21454524, PubMed:26527279). Cooperates with chromatin assembly factor 1 (CAF-1) to promote replication-dependent chromatin assembly (PubMed:11897662, PubMed:14718166, PubMed:15664198, PubMed:16151251). Also involved in the nuclear import of the histone H3-H4 dimer together with importin-4 (IPO4): specifically recognizes and binds newly synthesized histones with the monomethylation of H3 'Lys-9' (H3K9me1) and diacetylation at 'Lys-5' and 'Lys-12' of H4 (H4K5K12ac) marks in the cytosol (PubMed:20953179, PubMed:21454524, PubMed:26527279). Does not participate in replication-independent nucleosome deposition which is mediated by ASF1A and HIRA (PubMed:11897662, PubMed:14718166, PubMed:15664198, PubMed:16151251). Required for gonad development (PubMed:12842904).</text>
</comment>
<comment type="subunit">
    <text evidence="3 4 5 6 8 9 11 13 14 15">Interacts with histone H3 (via C-terminus), including histone H3.1, H3.2 and H3.3, and histone H4; the interaction with H3 is direct (PubMed:12842904, PubMed:14718166, PubMed:15664198, PubMed:16537536, PubMed:22195965). Interacts with the CHAF1A, CHAF1B and RBBP4 subunits of the CAF-1 complex (PubMed:11897662, PubMed:14718166, PubMed:16537536, PubMed:16980972). Interacts with HAT1, NASP and TAF1 (PubMed:12842904). Found in a soluble complex with NASP and histones H3 and H4; the interaction with NASP is probably indirect and mediated by H3-H4 (PubMed:22195965). Interacts with CDAN1 (PubMed:22407294). Found in a cytosolic complex with IPO4 and histones H3 and H4 (PubMed:20953179, PubMed:21454524, PubMed:22407294). Interacts with CREBBP (PubMed:24616510).</text>
</comment>
<comment type="interaction">
    <interactant intactId="EBI-1055650">
        <id>Q9NVP2</id>
    </interactant>
    <interactant intactId="EBI-1052944">
        <id>Q13112</id>
        <label>CHAF1B</label>
    </interactant>
    <organismsDiffer>false</organismsDiffer>
    <experiments>5</experiments>
</comment>
<comment type="interaction">
    <interactant intactId="EBI-1055650">
        <id>Q9NVP2</id>
    </interactant>
    <interactant intactId="EBI-120658">
        <id>P84243</id>
        <label>H3-3B</label>
    </interactant>
    <organismsDiffer>false</organismsDiffer>
    <experiments>5</experiments>
</comment>
<comment type="interaction">
    <interactant intactId="EBI-1055650">
        <id>Q9NVP2</id>
    </interactant>
    <interactant intactId="EBI-372342">
        <id>P54198</id>
        <label>HIRA</label>
    </interactant>
    <organismsDiffer>false</organismsDiffer>
    <experiments>6</experiments>
</comment>
<comment type="subcellular location">
    <subcellularLocation>
        <location evidence="4">Nucleus</location>
    </subcellularLocation>
    <subcellularLocation>
        <location evidence="14">Cytoplasm</location>
        <location evidence="14">Cytosol</location>
    </subcellularLocation>
</comment>
<comment type="tissue specificity">
    <text evidence="4">Highly expressed in testis and at lower levels in colon, small intestine and thymus.</text>
</comment>
<comment type="PTM">
    <text evidence="2 10 17">Phosphorylated by TLK1 and TLK2.</text>
</comment>
<comment type="similarity">
    <text evidence="20">Belongs to the ASF1 family.</text>
</comment>
<protein>
    <recommendedName>
        <fullName evidence="20">Histone chaperone ASF1B</fullName>
    </recommendedName>
    <alternativeName>
        <fullName evidence="18">Anti-silencing function protein 1 homolog B</fullName>
        <shortName evidence="18">hAsf1</shortName>
        <shortName evidence="18">hAsf1b</shortName>
    </alternativeName>
    <alternativeName>
        <fullName evidence="19">CCG1-interacting factor A-II</fullName>
        <shortName evidence="19">CIA-II</shortName>
        <shortName evidence="19">hCIA-II</shortName>
    </alternativeName>
</protein>